<dbReference type="EMBL" id="AE017143">
    <property type="protein sequence ID" value="AAP96695.1"/>
    <property type="molecule type" value="Genomic_DNA"/>
</dbReference>
<dbReference type="RefSeq" id="WP_010945717.1">
    <property type="nucleotide sequence ID" value="NC_002940.2"/>
</dbReference>
<dbReference type="SMR" id="Q7VKD6"/>
<dbReference type="STRING" id="233412.HD_1978"/>
<dbReference type="KEGG" id="hdu:HD_1978"/>
<dbReference type="eggNOG" id="COG0091">
    <property type="taxonomic scope" value="Bacteria"/>
</dbReference>
<dbReference type="HOGENOM" id="CLU_083987_3_3_6"/>
<dbReference type="OrthoDB" id="9805969at2"/>
<dbReference type="Proteomes" id="UP000001022">
    <property type="component" value="Chromosome"/>
</dbReference>
<dbReference type="GO" id="GO:0022625">
    <property type="term" value="C:cytosolic large ribosomal subunit"/>
    <property type="evidence" value="ECO:0007669"/>
    <property type="project" value="TreeGrafter"/>
</dbReference>
<dbReference type="GO" id="GO:0019843">
    <property type="term" value="F:rRNA binding"/>
    <property type="evidence" value="ECO:0007669"/>
    <property type="project" value="UniProtKB-UniRule"/>
</dbReference>
<dbReference type="GO" id="GO:0003735">
    <property type="term" value="F:structural constituent of ribosome"/>
    <property type="evidence" value="ECO:0007669"/>
    <property type="project" value="InterPro"/>
</dbReference>
<dbReference type="GO" id="GO:0006412">
    <property type="term" value="P:translation"/>
    <property type="evidence" value="ECO:0007669"/>
    <property type="project" value="UniProtKB-UniRule"/>
</dbReference>
<dbReference type="CDD" id="cd00336">
    <property type="entry name" value="Ribosomal_L22"/>
    <property type="match status" value="1"/>
</dbReference>
<dbReference type="FunFam" id="3.90.470.10:FF:000001">
    <property type="entry name" value="50S ribosomal protein L22"/>
    <property type="match status" value="1"/>
</dbReference>
<dbReference type="Gene3D" id="3.90.470.10">
    <property type="entry name" value="Ribosomal protein L22/L17"/>
    <property type="match status" value="1"/>
</dbReference>
<dbReference type="HAMAP" id="MF_01331_B">
    <property type="entry name" value="Ribosomal_uL22_B"/>
    <property type="match status" value="1"/>
</dbReference>
<dbReference type="InterPro" id="IPR001063">
    <property type="entry name" value="Ribosomal_uL22"/>
</dbReference>
<dbReference type="InterPro" id="IPR005727">
    <property type="entry name" value="Ribosomal_uL22_bac/chlpt-type"/>
</dbReference>
<dbReference type="InterPro" id="IPR047867">
    <property type="entry name" value="Ribosomal_uL22_bac/org-type"/>
</dbReference>
<dbReference type="InterPro" id="IPR018260">
    <property type="entry name" value="Ribosomal_uL22_CS"/>
</dbReference>
<dbReference type="InterPro" id="IPR036394">
    <property type="entry name" value="Ribosomal_uL22_sf"/>
</dbReference>
<dbReference type="NCBIfam" id="TIGR01044">
    <property type="entry name" value="rplV_bact"/>
    <property type="match status" value="1"/>
</dbReference>
<dbReference type="PANTHER" id="PTHR13501">
    <property type="entry name" value="CHLOROPLAST 50S RIBOSOMAL PROTEIN L22-RELATED"/>
    <property type="match status" value="1"/>
</dbReference>
<dbReference type="PANTHER" id="PTHR13501:SF8">
    <property type="entry name" value="LARGE RIBOSOMAL SUBUNIT PROTEIN UL22M"/>
    <property type="match status" value="1"/>
</dbReference>
<dbReference type="Pfam" id="PF00237">
    <property type="entry name" value="Ribosomal_L22"/>
    <property type="match status" value="1"/>
</dbReference>
<dbReference type="SUPFAM" id="SSF54843">
    <property type="entry name" value="Ribosomal protein L22"/>
    <property type="match status" value="1"/>
</dbReference>
<dbReference type="PROSITE" id="PS00464">
    <property type="entry name" value="RIBOSOMAL_L22"/>
    <property type="match status" value="1"/>
</dbReference>
<keyword id="KW-1185">Reference proteome</keyword>
<keyword id="KW-0687">Ribonucleoprotein</keyword>
<keyword id="KW-0689">Ribosomal protein</keyword>
<keyword id="KW-0694">RNA-binding</keyword>
<keyword id="KW-0699">rRNA-binding</keyword>
<protein>
    <recommendedName>
        <fullName evidence="1">Large ribosomal subunit protein uL22</fullName>
    </recommendedName>
    <alternativeName>
        <fullName evidence="2">50S ribosomal protein L22</fullName>
    </alternativeName>
</protein>
<accession>Q7VKD6</accession>
<proteinExistence type="inferred from homology"/>
<gene>
    <name evidence="1" type="primary">rplV</name>
    <name type="ordered locus">HD_1978</name>
</gene>
<comment type="function">
    <text evidence="1">This protein binds specifically to 23S rRNA; its binding is stimulated by other ribosomal proteins, e.g. L4, L17, and L20. It is important during the early stages of 50S assembly. It makes multiple contacts with different domains of the 23S rRNA in the assembled 50S subunit and ribosome (By similarity).</text>
</comment>
<comment type="function">
    <text evidence="1">The globular domain of the protein is located near the polypeptide exit tunnel on the outside of the subunit, while an extended beta-hairpin is found that lines the wall of the exit tunnel in the center of the 70S ribosome.</text>
</comment>
<comment type="subunit">
    <text evidence="1">Part of the 50S ribosomal subunit.</text>
</comment>
<comment type="similarity">
    <text evidence="1">Belongs to the universal ribosomal protein uL22 family.</text>
</comment>
<organism>
    <name type="scientific">Haemophilus ducreyi (strain 35000HP / ATCC 700724)</name>
    <dbReference type="NCBI Taxonomy" id="233412"/>
    <lineage>
        <taxon>Bacteria</taxon>
        <taxon>Pseudomonadati</taxon>
        <taxon>Pseudomonadota</taxon>
        <taxon>Gammaproteobacteria</taxon>
        <taxon>Pasteurellales</taxon>
        <taxon>Pasteurellaceae</taxon>
        <taxon>Haemophilus</taxon>
    </lineage>
</organism>
<name>RL22_HAEDU</name>
<feature type="chain" id="PRO_0000125160" description="Large ribosomal subunit protein uL22">
    <location>
        <begin position="1"/>
        <end position="110"/>
    </location>
</feature>
<reference key="1">
    <citation type="submission" date="2003-06" db="EMBL/GenBank/DDBJ databases">
        <title>The complete genome sequence of Haemophilus ducreyi.</title>
        <authorList>
            <person name="Munson R.S. Jr."/>
            <person name="Ray W.C."/>
            <person name="Mahairas G."/>
            <person name="Sabo P."/>
            <person name="Mungur R."/>
            <person name="Johnson L."/>
            <person name="Nguyen D."/>
            <person name="Wang J."/>
            <person name="Forst C."/>
            <person name="Hood L."/>
        </authorList>
    </citation>
    <scope>NUCLEOTIDE SEQUENCE [LARGE SCALE GENOMIC DNA]</scope>
    <source>
        <strain>35000HP / ATCC 700724</strain>
    </source>
</reference>
<evidence type="ECO:0000255" key="1">
    <source>
        <dbReference type="HAMAP-Rule" id="MF_01331"/>
    </source>
</evidence>
<evidence type="ECO:0000305" key="2"/>
<sequence length="110" mass="12150">METIAKHRYARTSAQKARLVADLIRGKKVAQALEILTFTNKKASALVKKVLESAIANAEHNDGADVDDLKVAKIFVDEGPSMKRVMPRAKGRADRILKRTSHITVVVSDR</sequence>